<reference key="1">
    <citation type="journal article" date="2005" name="Proc. Natl. Acad. Sci. U.S.A.">
        <title>The psychrophilic lifestyle as revealed by the genome sequence of Colwellia psychrerythraea 34H through genomic and proteomic analyses.</title>
        <authorList>
            <person name="Methe B.A."/>
            <person name="Nelson K.E."/>
            <person name="Deming J.W."/>
            <person name="Momen B."/>
            <person name="Melamud E."/>
            <person name="Zhang X."/>
            <person name="Moult J."/>
            <person name="Madupu R."/>
            <person name="Nelson W.C."/>
            <person name="Dodson R.J."/>
            <person name="Brinkac L.M."/>
            <person name="Daugherty S.C."/>
            <person name="Durkin A.S."/>
            <person name="DeBoy R.T."/>
            <person name="Kolonay J.F."/>
            <person name="Sullivan S.A."/>
            <person name="Zhou L."/>
            <person name="Davidsen T.M."/>
            <person name="Wu M."/>
            <person name="Huston A.L."/>
            <person name="Lewis M."/>
            <person name="Weaver B."/>
            <person name="Weidman J.F."/>
            <person name="Khouri H."/>
            <person name="Utterback T.R."/>
            <person name="Feldblyum T.V."/>
            <person name="Fraser C.M."/>
        </authorList>
    </citation>
    <scope>NUCLEOTIDE SEQUENCE [LARGE SCALE GENOMIC DNA]</scope>
    <source>
        <strain>34H / ATCC BAA-681</strain>
    </source>
</reference>
<feature type="chain" id="PRO_1000011458" description="4-hydroxy-3-methylbut-2-en-1-yl diphosphate synthase (flavodoxin)">
    <location>
        <begin position="1"/>
        <end position="376"/>
    </location>
</feature>
<feature type="binding site" evidence="1">
    <location>
        <position position="270"/>
    </location>
    <ligand>
        <name>[4Fe-4S] cluster</name>
        <dbReference type="ChEBI" id="CHEBI:49883"/>
    </ligand>
</feature>
<feature type="binding site" evidence="1">
    <location>
        <position position="273"/>
    </location>
    <ligand>
        <name>[4Fe-4S] cluster</name>
        <dbReference type="ChEBI" id="CHEBI:49883"/>
    </ligand>
</feature>
<feature type="binding site" evidence="1">
    <location>
        <position position="305"/>
    </location>
    <ligand>
        <name>[4Fe-4S] cluster</name>
        <dbReference type="ChEBI" id="CHEBI:49883"/>
    </ligand>
</feature>
<feature type="binding site" evidence="1">
    <location>
        <position position="312"/>
    </location>
    <ligand>
        <name>[4Fe-4S] cluster</name>
        <dbReference type="ChEBI" id="CHEBI:49883"/>
    </ligand>
</feature>
<gene>
    <name evidence="1" type="primary">ispG</name>
    <name type="ordered locus">CPS_4252</name>
</gene>
<name>ISPG_COLP3</name>
<accession>Q47WC0</accession>
<protein>
    <recommendedName>
        <fullName evidence="1">4-hydroxy-3-methylbut-2-en-1-yl diphosphate synthase (flavodoxin)</fullName>
        <ecNumber evidence="1">1.17.7.3</ecNumber>
    </recommendedName>
    <alternativeName>
        <fullName evidence="1">1-hydroxy-2-methyl-2-(E)-butenyl 4-diphosphate synthase</fullName>
    </alternativeName>
</protein>
<dbReference type="EC" id="1.17.7.3" evidence="1"/>
<dbReference type="EMBL" id="CP000083">
    <property type="protein sequence ID" value="AAZ24704.1"/>
    <property type="molecule type" value="Genomic_DNA"/>
</dbReference>
<dbReference type="RefSeq" id="WP_011044983.1">
    <property type="nucleotide sequence ID" value="NC_003910.7"/>
</dbReference>
<dbReference type="SMR" id="Q47WC0"/>
<dbReference type="STRING" id="167879.CPS_4252"/>
<dbReference type="DNASU" id="3518903"/>
<dbReference type="KEGG" id="cps:CPS_4252"/>
<dbReference type="eggNOG" id="COG0821">
    <property type="taxonomic scope" value="Bacteria"/>
</dbReference>
<dbReference type="HOGENOM" id="CLU_042258_0_0_6"/>
<dbReference type="UniPathway" id="UPA00056">
    <property type="reaction ID" value="UER00096"/>
</dbReference>
<dbReference type="Proteomes" id="UP000000547">
    <property type="component" value="Chromosome"/>
</dbReference>
<dbReference type="GO" id="GO:0051539">
    <property type="term" value="F:4 iron, 4 sulfur cluster binding"/>
    <property type="evidence" value="ECO:0007669"/>
    <property type="project" value="UniProtKB-UniRule"/>
</dbReference>
<dbReference type="GO" id="GO:0046429">
    <property type="term" value="F:4-hydroxy-3-methylbut-2-en-1-yl diphosphate synthase activity (ferredoxin)"/>
    <property type="evidence" value="ECO:0007669"/>
    <property type="project" value="UniProtKB-UniRule"/>
</dbReference>
<dbReference type="GO" id="GO:0141197">
    <property type="term" value="F:4-hydroxy-3-methylbut-2-enyl-diphosphate synthase activity (flavodoxin)"/>
    <property type="evidence" value="ECO:0007669"/>
    <property type="project" value="UniProtKB-EC"/>
</dbReference>
<dbReference type="GO" id="GO:0005506">
    <property type="term" value="F:iron ion binding"/>
    <property type="evidence" value="ECO:0007669"/>
    <property type="project" value="InterPro"/>
</dbReference>
<dbReference type="GO" id="GO:0019288">
    <property type="term" value="P:isopentenyl diphosphate biosynthetic process, methylerythritol 4-phosphate pathway"/>
    <property type="evidence" value="ECO:0007669"/>
    <property type="project" value="UniProtKB-UniRule"/>
</dbReference>
<dbReference type="GO" id="GO:0016114">
    <property type="term" value="P:terpenoid biosynthetic process"/>
    <property type="evidence" value="ECO:0007669"/>
    <property type="project" value="InterPro"/>
</dbReference>
<dbReference type="FunFam" id="3.20.20.20:FF:000001">
    <property type="entry name" value="4-hydroxy-3-methylbut-2-en-1-yl diphosphate synthase (flavodoxin)"/>
    <property type="match status" value="1"/>
</dbReference>
<dbReference type="Gene3D" id="3.20.20.20">
    <property type="entry name" value="Dihydropteroate synthase-like"/>
    <property type="match status" value="1"/>
</dbReference>
<dbReference type="Gene3D" id="3.30.413.10">
    <property type="entry name" value="Sulfite Reductase Hemoprotein, domain 1"/>
    <property type="match status" value="1"/>
</dbReference>
<dbReference type="HAMAP" id="MF_00159">
    <property type="entry name" value="IspG"/>
    <property type="match status" value="1"/>
</dbReference>
<dbReference type="InterPro" id="IPR011005">
    <property type="entry name" value="Dihydropteroate_synth-like_sf"/>
</dbReference>
<dbReference type="InterPro" id="IPR036849">
    <property type="entry name" value="Enolase-like_C_sf"/>
</dbReference>
<dbReference type="InterPro" id="IPR016425">
    <property type="entry name" value="IspG_bac"/>
</dbReference>
<dbReference type="InterPro" id="IPR004588">
    <property type="entry name" value="IspG_bac-typ"/>
</dbReference>
<dbReference type="InterPro" id="IPR045854">
    <property type="entry name" value="NO2/SO3_Rdtase_4Fe4S_sf"/>
</dbReference>
<dbReference type="NCBIfam" id="TIGR00612">
    <property type="entry name" value="ispG_gcpE"/>
    <property type="match status" value="1"/>
</dbReference>
<dbReference type="NCBIfam" id="NF001540">
    <property type="entry name" value="PRK00366.1"/>
    <property type="match status" value="1"/>
</dbReference>
<dbReference type="PANTHER" id="PTHR30454">
    <property type="entry name" value="4-HYDROXY-3-METHYLBUT-2-EN-1-YL DIPHOSPHATE SYNTHASE"/>
    <property type="match status" value="1"/>
</dbReference>
<dbReference type="PANTHER" id="PTHR30454:SF0">
    <property type="entry name" value="4-HYDROXY-3-METHYLBUT-2-EN-1-YL DIPHOSPHATE SYNTHASE (FERREDOXIN), CHLOROPLASTIC"/>
    <property type="match status" value="1"/>
</dbReference>
<dbReference type="Pfam" id="PF04551">
    <property type="entry name" value="GcpE"/>
    <property type="match status" value="1"/>
</dbReference>
<dbReference type="PIRSF" id="PIRSF004640">
    <property type="entry name" value="IspG"/>
    <property type="match status" value="1"/>
</dbReference>
<dbReference type="SUPFAM" id="SSF51604">
    <property type="entry name" value="Enolase C-terminal domain-like"/>
    <property type="match status" value="1"/>
</dbReference>
<dbReference type="SUPFAM" id="SSF56014">
    <property type="entry name" value="Nitrite and sulphite reductase 4Fe-4S domain-like"/>
    <property type="match status" value="1"/>
</dbReference>
<comment type="function">
    <text evidence="1">Converts 2C-methyl-D-erythritol 2,4-cyclodiphosphate (ME-2,4cPP) into 1-hydroxy-2-methyl-2-(E)-butenyl 4-diphosphate.</text>
</comment>
<comment type="catalytic activity">
    <reaction evidence="1">
        <text>(2E)-4-hydroxy-3-methylbut-2-enyl diphosphate + oxidized [flavodoxin] + H2O + 2 H(+) = 2-C-methyl-D-erythritol 2,4-cyclic diphosphate + reduced [flavodoxin]</text>
        <dbReference type="Rhea" id="RHEA:43604"/>
        <dbReference type="Rhea" id="RHEA-COMP:10622"/>
        <dbReference type="Rhea" id="RHEA-COMP:10623"/>
        <dbReference type="ChEBI" id="CHEBI:15377"/>
        <dbReference type="ChEBI" id="CHEBI:15378"/>
        <dbReference type="ChEBI" id="CHEBI:57618"/>
        <dbReference type="ChEBI" id="CHEBI:58210"/>
        <dbReference type="ChEBI" id="CHEBI:58483"/>
        <dbReference type="ChEBI" id="CHEBI:128753"/>
        <dbReference type="EC" id="1.17.7.3"/>
    </reaction>
</comment>
<comment type="cofactor">
    <cofactor evidence="1">
        <name>[4Fe-4S] cluster</name>
        <dbReference type="ChEBI" id="CHEBI:49883"/>
    </cofactor>
    <text evidence="1">Binds 1 [4Fe-4S] cluster.</text>
</comment>
<comment type="pathway">
    <text evidence="1">Isoprenoid biosynthesis; isopentenyl diphosphate biosynthesis via DXP pathway; isopentenyl diphosphate from 1-deoxy-D-xylulose 5-phosphate: step 5/6.</text>
</comment>
<comment type="similarity">
    <text evidence="1">Belongs to the IspG family.</text>
</comment>
<keyword id="KW-0004">4Fe-4S</keyword>
<keyword id="KW-0408">Iron</keyword>
<keyword id="KW-0411">Iron-sulfur</keyword>
<keyword id="KW-0414">Isoprene biosynthesis</keyword>
<keyword id="KW-0479">Metal-binding</keyword>
<keyword id="KW-0560">Oxidoreductase</keyword>
<proteinExistence type="inferred from homology"/>
<sequence length="376" mass="41118">MFKESPIIRRVSRQIMVGNVPVGGDAPITVQSMTNTLTTDVAATVAQIKALEAVGADIVRVSVPTMDAAEAFREIKKQVNVPLVADIHFDYRIALKVAEYGVDCLRINPGNIGNENRIRSVVECARDNNIPIRIGVNGGSLEKDIQEKYTEPTPEALLESAMRHVDILDRLNFNEFKVSVKASDVFLAVESYKLLAKQIDNPLHLGITEAGGLRSGSVKSSVGLGLLLAQGIGDTIRISLAADPIEEIKVGFDILKSLKLRSRGINLIACPSCSRQEFDVVSTVNALEQRIEDIMTPMDVSIIGCIVNGPGEAMVSDLGLTGSSKKSGYYLDGIRQKERFDNTDLVDQLEQRIRAKARSMSERLDEKNKIDILTKD</sequence>
<organism>
    <name type="scientific">Colwellia psychrerythraea (strain 34H / ATCC BAA-681)</name>
    <name type="common">Vibrio psychroerythus</name>
    <dbReference type="NCBI Taxonomy" id="167879"/>
    <lineage>
        <taxon>Bacteria</taxon>
        <taxon>Pseudomonadati</taxon>
        <taxon>Pseudomonadota</taxon>
        <taxon>Gammaproteobacteria</taxon>
        <taxon>Alteromonadales</taxon>
        <taxon>Colwelliaceae</taxon>
        <taxon>Colwellia</taxon>
    </lineage>
</organism>
<evidence type="ECO:0000255" key="1">
    <source>
        <dbReference type="HAMAP-Rule" id="MF_00159"/>
    </source>
</evidence>